<keyword id="KW-0028">Amino-acid biosynthesis</keyword>
<keyword id="KW-0963">Cytoplasm</keyword>
<keyword id="KW-0521">NADP</keyword>
<keyword id="KW-0560">Oxidoreductase</keyword>
<keyword id="KW-0641">Proline biosynthesis</keyword>
<keyword id="KW-1185">Reference proteome</keyword>
<feature type="chain" id="PRO_0000189731" description="Gamma-glutamyl phosphate reductase">
    <location>
        <begin position="1"/>
        <end position="427"/>
    </location>
</feature>
<evidence type="ECO:0000255" key="1">
    <source>
        <dbReference type="HAMAP-Rule" id="MF_00412"/>
    </source>
</evidence>
<dbReference type="EC" id="1.2.1.41" evidence="1"/>
<dbReference type="EMBL" id="CP000009">
    <property type="protein sequence ID" value="AAW60914.1"/>
    <property type="molecule type" value="Genomic_DNA"/>
</dbReference>
<dbReference type="SMR" id="Q5FRT2"/>
<dbReference type="STRING" id="290633.GOX1147"/>
<dbReference type="KEGG" id="gox:GOX1147"/>
<dbReference type="eggNOG" id="COG0014">
    <property type="taxonomic scope" value="Bacteria"/>
</dbReference>
<dbReference type="HOGENOM" id="CLU_030231_0_0_5"/>
<dbReference type="UniPathway" id="UPA00098">
    <property type="reaction ID" value="UER00360"/>
</dbReference>
<dbReference type="Proteomes" id="UP000006375">
    <property type="component" value="Chromosome"/>
</dbReference>
<dbReference type="GO" id="GO:0005737">
    <property type="term" value="C:cytoplasm"/>
    <property type="evidence" value="ECO:0007669"/>
    <property type="project" value="UniProtKB-SubCell"/>
</dbReference>
<dbReference type="GO" id="GO:0004350">
    <property type="term" value="F:glutamate-5-semialdehyde dehydrogenase activity"/>
    <property type="evidence" value="ECO:0007669"/>
    <property type="project" value="UniProtKB-UniRule"/>
</dbReference>
<dbReference type="GO" id="GO:0050661">
    <property type="term" value="F:NADP binding"/>
    <property type="evidence" value="ECO:0007669"/>
    <property type="project" value="InterPro"/>
</dbReference>
<dbReference type="GO" id="GO:0055129">
    <property type="term" value="P:L-proline biosynthetic process"/>
    <property type="evidence" value="ECO:0007669"/>
    <property type="project" value="UniProtKB-UniRule"/>
</dbReference>
<dbReference type="CDD" id="cd07079">
    <property type="entry name" value="ALDH_F18-19_ProA-GPR"/>
    <property type="match status" value="1"/>
</dbReference>
<dbReference type="Gene3D" id="3.40.605.10">
    <property type="entry name" value="Aldehyde Dehydrogenase, Chain A, domain 1"/>
    <property type="match status" value="1"/>
</dbReference>
<dbReference type="Gene3D" id="3.40.309.10">
    <property type="entry name" value="Aldehyde Dehydrogenase, Chain A, domain 2"/>
    <property type="match status" value="1"/>
</dbReference>
<dbReference type="HAMAP" id="MF_00412">
    <property type="entry name" value="ProA"/>
    <property type="match status" value="1"/>
</dbReference>
<dbReference type="InterPro" id="IPR016161">
    <property type="entry name" value="Ald_DH/histidinol_DH"/>
</dbReference>
<dbReference type="InterPro" id="IPR016163">
    <property type="entry name" value="Ald_DH_C"/>
</dbReference>
<dbReference type="InterPro" id="IPR016162">
    <property type="entry name" value="Ald_DH_N"/>
</dbReference>
<dbReference type="InterPro" id="IPR015590">
    <property type="entry name" value="Aldehyde_DH_dom"/>
</dbReference>
<dbReference type="InterPro" id="IPR020593">
    <property type="entry name" value="G-glutamylP_reductase_CS"/>
</dbReference>
<dbReference type="InterPro" id="IPR012134">
    <property type="entry name" value="Glu-5-SA_DH"/>
</dbReference>
<dbReference type="InterPro" id="IPR000965">
    <property type="entry name" value="GPR_dom"/>
</dbReference>
<dbReference type="NCBIfam" id="NF001221">
    <property type="entry name" value="PRK00197.1"/>
    <property type="match status" value="1"/>
</dbReference>
<dbReference type="NCBIfam" id="TIGR00407">
    <property type="entry name" value="proA"/>
    <property type="match status" value="1"/>
</dbReference>
<dbReference type="PANTHER" id="PTHR11063:SF8">
    <property type="entry name" value="DELTA-1-PYRROLINE-5-CARBOXYLATE SYNTHASE"/>
    <property type="match status" value="1"/>
</dbReference>
<dbReference type="PANTHER" id="PTHR11063">
    <property type="entry name" value="GLUTAMATE SEMIALDEHYDE DEHYDROGENASE"/>
    <property type="match status" value="1"/>
</dbReference>
<dbReference type="Pfam" id="PF00171">
    <property type="entry name" value="Aldedh"/>
    <property type="match status" value="1"/>
</dbReference>
<dbReference type="PIRSF" id="PIRSF000151">
    <property type="entry name" value="GPR"/>
    <property type="match status" value="1"/>
</dbReference>
<dbReference type="SUPFAM" id="SSF53720">
    <property type="entry name" value="ALDH-like"/>
    <property type="match status" value="1"/>
</dbReference>
<dbReference type="PROSITE" id="PS01223">
    <property type="entry name" value="PROA"/>
    <property type="match status" value="1"/>
</dbReference>
<comment type="function">
    <text evidence="1">Catalyzes the NADPH-dependent reduction of L-glutamate 5-phosphate into L-glutamate 5-semialdehyde and phosphate. The product spontaneously undergoes cyclization to form 1-pyrroline-5-carboxylate.</text>
</comment>
<comment type="catalytic activity">
    <reaction evidence="1">
        <text>L-glutamate 5-semialdehyde + phosphate + NADP(+) = L-glutamyl 5-phosphate + NADPH + H(+)</text>
        <dbReference type="Rhea" id="RHEA:19541"/>
        <dbReference type="ChEBI" id="CHEBI:15378"/>
        <dbReference type="ChEBI" id="CHEBI:43474"/>
        <dbReference type="ChEBI" id="CHEBI:57783"/>
        <dbReference type="ChEBI" id="CHEBI:58066"/>
        <dbReference type="ChEBI" id="CHEBI:58274"/>
        <dbReference type="ChEBI" id="CHEBI:58349"/>
        <dbReference type="EC" id="1.2.1.41"/>
    </reaction>
</comment>
<comment type="pathway">
    <text evidence="1">Amino-acid biosynthesis; L-proline biosynthesis; L-glutamate 5-semialdehyde from L-glutamate: step 2/2.</text>
</comment>
<comment type="subcellular location">
    <subcellularLocation>
        <location evidence="1">Cytoplasm</location>
    </subcellularLocation>
</comment>
<comment type="similarity">
    <text evidence="1">Belongs to the gamma-glutamyl phosphate reductase family.</text>
</comment>
<name>PROA_GLUOX</name>
<reference key="1">
    <citation type="journal article" date="2005" name="Nat. Biotechnol.">
        <title>Complete genome sequence of the acetic acid bacterium Gluconobacter oxydans.</title>
        <authorList>
            <person name="Prust C."/>
            <person name="Hoffmeister M."/>
            <person name="Liesegang H."/>
            <person name="Wiezer A."/>
            <person name="Fricke W.F."/>
            <person name="Ehrenreich A."/>
            <person name="Gottschalk G."/>
            <person name="Deppenmeier U."/>
        </authorList>
    </citation>
    <scope>NUCLEOTIDE SEQUENCE [LARGE SCALE GENOMIC DNA]</scope>
    <source>
        <strain>621H</strain>
    </source>
</reference>
<proteinExistence type="inferred from homology"/>
<gene>
    <name evidence="1" type="primary">proA</name>
    <name type="ordered locus">GOX1147</name>
</gene>
<organism>
    <name type="scientific">Gluconobacter oxydans (strain 621H)</name>
    <name type="common">Gluconobacter suboxydans</name>
    <dbReference type="NCBI Taxonomy" id="290633"/>
    <lineage>
        <taxon>Bacteria</taxon>
        <taxon>Pseudomonadati</taxon>
        <taxon>Pseudomonadota</taxon>
        <taxon>Alphaproteobacteria</taxon>
        <taxon>Acetobacterales</taxon>
        <taxon>Acetobacteraceae</taxon>
        <taxon>Gluconobacter</taxon>
    </lineage>
</organism>
<protein>
    <recommendedName>
        <fullName evidence="1">Gamma-glutamyl phosphate reductase</fullName>
        <shortName evidence="1">GPR</shortName>
        <ecNumber evidence="1">1.2.1.41</ecNumber>
    </recommendedName>
    <alternativeName>
        <fullName evidence="1">Glutamate-5-semialdehyde dehydrogenase</fullName>
    </alternativeName>
    <alternativeName>
        <fullName evidence="1">Glutamyl-gamma-semialdehyde dehydrogenase</fullName>
        <shortName evidence="1">GSA dehydrogenase</shortName>
    </alternativeName>
</protein>
<accession>Q5FRT2</accession>
<sequence>MVTSCCSGSMSEAGHILDGLAEHARRASRSLARANAGTRNHALSEAAKALRVRSDEIVAANQKDLAALSEDRNAAFRDRLTLTPERVEAMARGLEDVAGLPDPVGRVLAEWDRPNGLHFRRVATPLGVIGMIYESRPNVGADAAALCIKSGNAVILRGGGESLHSARAIQAAMEDGLRAAGLDEACVQILPSADRALVGAMLQASGKIDLIIPRGGKSLVERVQREARVPVLAHADGLNHTYIHASADPAMARKILLDAKMRRTGICGATETLLIDAAIAPALLPLLVEDLAAKGCTFRADDRARAIVPTLAAASADDFDTEWLDAVLSVAVVDGVEDALDHIARHGSSHTEAIIAEDPEAAAEFLNGTDSAVVMWNASTQFCDGGEFGFGAEIGIATGRMHARGPVGLEQLTCYRYEVIGTGQVRG</sequence>